<protein>
    <recommendedName>
        <fullName evidence="1">Methionyl-tRNA formyltransferase</fullName>
        <ecNumber evidence="1">2.1.2.9</ecNumber>
    </recommendedName>
</protein>
<organism>
    <name type="scientific">Photorhabdus laumondii subsp. laumondii (strain DSM 15139 / CIP 105565 / TT01)</name>
    <name type="common">Photorhabdus luminescens subsp. laumondii</name>
    <dbReference type="NCBI Taxonomy" id="243265"/>
    <lineage>
        <taxon>Bacteria</taxon>
        <taxon>Pseudomonadati</taxon>
        <taxon>Pseudomonadota</taxon>
        <taxon>Gammaproteobacteria</taxon>
        <taxon>Enterobacterales</taxon>
        <taxon>Morganellaceae</taxon>
        <taxon>Photorhabdus</taxon>
    </lineage>
</organism>
<comment type="function">
    <text evidence="1">Attaches a formyl group to the free amino group of methionyl-tRNA(fMet). The formyl group appears to play a dual role in the initiator identity of N-formylmethionyl-tRNA by promoting its recognition by IF2 and preventing the misappropriation of this tRNA by the elongation apparatus.</text>
</comment>
<comment type="catalytic activity">
    <reaction evidence="1">
        <text>L-methionyl-tRNA(fMet) + (6R)-10-formyltetrahydrofolate = N-formyl-L-methionyl-tRNA(fMet) + (6S)-5,6,7,8-tetrahydrofolate + H(+)</text>
        <dbReference type="Rhea" id="RHEA:24380"/>
        <dbReference type="Rhea" id="RHEA-COMP:9952"/>
        <dbReference type="Rhea" id="RHEA-COMP:9953"/>
        <dbReference type="ChEBI" id="CHEBI:15378"/>
        <dbReference type="ChEBI" id="CHEBI:57453"/>
        <dbReference type="ChEBI" id="CHEBI:78530"/>
        <dbReference type="ChEBI" id="CHEBI:78844"/>
        <dbReference type="ChEBI" id="CHEBI:195366"/>
        <dbReference type="EC" id="2.1.2.9"/>
    </reaction>
</comment>
<comment type="similarity">
    <text evidence="1">Belongs to the Fmt family.</text>
</comment>
<sequence length="315" mass="34794">MSDSLRIVFAGTPDFAARHLEALLMSQHEVVGVLTRPDKPAGRGKKLTPSPVKVLAEERNITVFQPATLRSEENQQWVLKQQPDVLIVVAYGLILPKVVLNIPELGCLNVHGSLLPRWRGAAPIQRSLWAGDTETGVTIMQMDIGLDTGDMLYKARCPITPEDTSASLYEKLANIGPDALLKTLSLITSGKSQPETQNENLVTYAEKLSKEEARINWELSATHLERCIRAFNPWPMSFFEMEGQPIKVWKAEAIEEQTSVEPGTVLKADKEGIYIATADGILNITQLQPAGKKAMSAANLLNSKREWFTPGNKIN</sequence>
<gene>
    <name evidence="1" type="primary">fmt</name>
    <name type="ordered locus">plu4696</name>
</gene>
<evidence type="ECO:0000255" key="1">
    <source>
        <dbReference type="HAMAP-Rule" id="MF_00182"/>
    </source>
</evidence>
<proteinExistence type="inferred from homology"/>
<feature type="chain" id="PRO_0000083010" description="Methionyl-tRNA formyltransferase">
    <location>
        <begin position="1"/>
        <end position="315"/>
    </location>
</feature>
<feature type="binding site" evidence="1">
    <location>
        <begin position="113"/>
        <end position="116"/>
    </location>
    <ligand>
        <name>(6S)-5,6,7,8-tetrahydrofolate</name>
        <dbReference type="ChEBI" id="CHEBI:57453"/>
    </ligand>
</feature>
<accession>Q7MYI1</accession>
<reference key="1">
    <citation type="journal article" date="2003" name="Nat. Biotechnol.">
        <title>The genome sequence of the entomopathogenic bacterium Photorhabdus luminescens.</title>
        <authorList>
            <person name="Duchaud E."/>
            <person name="Rusniok C."/>
            <person name="Frangeul L."/>
            <person name="Buchrieser C."/>
            <person name="Givaudan A."/>
            <person name="Taourit S."/>
            <person name="Bocs S."/>
            <person name="Boursaux-Eude C."/>
            <person name="Chandler M."/>
            <person name="Charles J.-F."/>
            <person name="Dassa E."/>
            <person name="Derose R."/>
            <person name="Derzelle S."/>
            <person name="Freyssinet G."/>
            <person name="Gaudriault S."/>
            <person name="Medigue C."/>
            <person name="Lanois A."/>
            <person name="Powell K."/>
            <person name="Siguier P."/>
            <person name="Vincent R."/>
            <person name="Wingate V."/>
            <person name="Zouine M."/>
            <person name="Glaser P."/>
            <person name="Boemare N."/>
            <person name="Danchin A."/>
            <person name="Kunst F."/>
        </authorList>
    </citation>
    <scope>NUCLEOTIDE SEQUENCE [LARGE SCALE GENOMIC DNA]</scope>
    <source>
        <strain>DSM 15139 / CIP 105565 / TT01</strain>
    </source>
</reference>
<name>FMT_PHOLL</name>
<keyword id="KW-0648">Protein biosynthesis</keyword>
<keyword id="KW-1185">Reference proteome</keyword>
<keyword id="KW-0808">Transferase</keyword>
<dbReference type="EC" id="2.1.2.9" evidence="1"/>
<dbReference type="EMBL" id="BX571874">
    <property type="protein sequence ID" value="CAE17068.1"/>
    <property type="molecule type" value="Genomic_DNA"/>
</dbReference>
<dbReference type="RefSeq" id="WP_011148766.1">
    <property type="nucleotide sequence ID" value="NC_005126.1"/>
</dbReference>
<dbReference type="SMR" id="Q7MYI1"/>
<dbReference type="STRING" id="243265.plu4696"/>
<dbReference type="GeneID" id="48850920"/>
<dbReference type="KEGG" id="plu:plu4696"/>
<dbReference type="eggNOG" id="COG0223">
    <property type="taxonomic scope" value="Bacteria"/>
</dbReference>
<dbReference type="HOGENOM" id="CLU_033347_1_2_6"/>
<dbReference type="OrthoDB" id="9802815at2"/>
<dbReference type="Proteomes" id="UP000002514">
    <property type="component" value="Chromosome"/>
</dbReference>
<dbReference type="GO" id="GO:0005829">
    <property type="term" value="C:cytosol"/>
    <property type="evidence" value="ECO:0007669"/>
    <property type="project" value="TreeGrafter"/>
</dbReference>
<dbReference type="GO" id="GO:0004479">
    <property type="term" value="F:methionyl-tRNA formyltransferase activity"/>
    <property type="evidence" value="ECO:0007669"/>
    <property type="project" value="UniProtKB-UniRule"/>
</dbReference>
<dbReference type="CDD" id="cd08646">
    <property type="entry name" value="FMT_core_Met-tRNA-FMT_N"/>
    <property type="match status" value="1"/>
</dbReference>
<dbReference type="CDD" id="cd08704">
    <property type="entry name" value="Met_tRNA_FMT_C"/>
    <property type="match status" value="1"/>
</dbReference>
<dbReference type="FunFam" id="3.10.25.10:FF:000001">
    <property type="entry name" value="Methionyl-tRNA formyltransferase"/>
    <property type="match status" value="1"/>
</dbReference>
<dbReference type="FunFam" id="3.40.50.170:FF:000003">
    <property type="entry name" value="Methionyl-tRNA formyltransferase"/>
    <property type="match status" value="1"/>
</dbReference>
<dbReference type="Gene3D" id="3.10.25.10">
    <property type="entry name" value="Formyl transferase, C-terminal domain"/>
    <property type="match status" value="1"/>
</dbReference>
<dbReference type="Gene3D" id="3.40.50.170">
    <property type="entry name" value="Formyl transferase, N-terminal domain"/>
    <property type="match status" value="1"/>
</dbReference>
<dbReference type="HAMAP" id="MF_00182">
    <property type="entry name" value="Formyl_trans"/>
    <property type="match status" value="1"/>
</dbReference>
<dbReference type="InterPro" id="IPR005794">
    <property type="entry name" value="Fmt"/>
</dbReference>
<dbReference type="InterPro" id="IPR005793">
    <property type="entry name" value="Formyl_trans_C"/>
</dbReference>
<dbReference type="InterPro" id="IPR037022">
    <property type="entry name" value="Formyl_trans_C_sf"/>
</dbReference>
<dbReference type="InterPro" id="IPR002376">
    <property type="entry name" value="Formyl_transf_N"/>
</dbReference>
<dbReference type="InterPro" id="IPR036477">
    <property type="entry name" value="Formyl_transf_N_sf"/>
</dbReference>
<dbReference type="InterPro" id="IPR011034">
    <property type="entry name" value="Formyl_transferase-like_C_sf"/>
</dbReference>
<dbReference type="InterPro" id="IPR001555">
    <property type="entry name" value="GART_AS"/>
</dbReference>
<dbReference type="InterPro" id="IPR044135">
    <property type="entry name" value="Met-tRNA-FMT_C"/>
</dbReference>
<dbReference type="InterPro" id="IPR041711">
    <property type="entry name" value="Met-tRNA-FMT_N"/>
</dbReference>
<dbReference type="NCBIfam" id="TIGR00460">
    <property type="entry name" value="fmt"/>
    <property type="match status" value="1"/>
</dbReference>
<dbReference type="PANTHER" id="PTHR11138">
    <property type="entry name" value="METHIONYL-TRNA FORMYLTRANSFERASE"/>
    <property type="match status" value="1"/>
</dbReference>
<dbReference type="PANTHER" id="PTHR11138:SF5">
    <property type="entry name" value="METHIONYL-TRNA FORMYLTRANSFERASE, MITOCHONDRIAL"/>
    <property type="match status" value="1"/>
</dbReference>
<dbReference type="Pfam" id="PF02911">
    <property type="entry name" value="Formyl_trans_C"/>
    <property type="match status" value="1"/>
</dbReference>
<dbReference type="Pfam" id="PF00551">
    <property type="entry name" value="Formyl_trans_N"/>
    <property type="match status" value="1"/>
</dbReference>
<dbReference type="SUPFAM" id="SSF50486">
    <property type="entry name" value="FMT C-terminal domain-like"/>
    <property type="match status" value="1"/>
</dbReference>
<dbReference type="SUPFAM" id="SSF53328">
    <property type="entry name" value="Formyltransferase"/>
    <property type="match status" value="1"/>
</dbReference>
<dbReference type="PROSITE" id="PS00373">
    <property type="entry name" value="GART"/>
    <property type="match status" value="1"/>
</dbReference>